<comment type="function">
    <text evidence="1">Essential for recycling GMP and indirectly, cGMP.</text>
</comment>
<comment type="catalytic activity">
    <reaction>
        <text>GMP + ATP = GDP + ADP</text>
        <dbReference type="Rhea" id="RHEA:20780"/>
        <dbReference type="ChEBI" id="CHEBI:30616"/>
        <dbReference type="ChEBI" id="CHEBI:58115"/>
        <dbReference type="ChEBI" id="CHEBI:58189"/>
        <dbReference type="ChEBI" id="CHEBI:456216"/>
        <dbReference type="EC" id="2.7.4.8"/>
    </reaction>
</comment>
<comment type="subcellular location">
    <subcellularLocation>
        <location evidence="1">Cytoplasm</location>
    </subcellularLocation>
</comment>
<comment type="similarity">
    <text evidence="2">Belongs to the guanylate kinase family.</text>
</comment>
<comment type="sequence caution" evidence="2">
    <conflict type="erroneous initiation">
        <sequence resource="EMBL-CDS" id="AAN82909"/>
    </conflict>
</comment>
<accession>P60547</accession>
<accession>P24234</accession>
<evidence type="ECO:0000250" key="1"/>
<evidence type="ECO:0000305" key="2"/>
<protein>
    <recommendedName>
        <fullName>Guanylate kinase</fullName>
        <ecNumber>2.7.4.8</ecNumber>
    </recommendedName>
    <alternativeName>
        <fullName>GMP kinase</fullName>
    </alternativeName>
</protein>
<gene>
    <name type="primary">gmk</name>
    <name type="ordered locus">c4473</name>
</gene>
<proteinExistence type="inferred from homology"/>
<organism>
    <name type="scientific">Escherichia coli O6:H1 (strain CFT073 / ATCC 700928 / UPEC)</name>
    <dbReference type="NCBI Taxonomy" id="199310"/>
    <lineage>
        <taxon>Bacteria</taxon>
        <taxon>Pseudomonadati</taxon>
        <taxon>Pseudomonadota</taxon>
        <taxon>Gammaproteobacteria</taxon>
        <taxon>Enterobacterales</taxon>
        <taxon>Enterobacteriaceae</taxon>
        <taxon>Escherichia</taxon>
    </lineage>
</organism>
<keyword id="KW-0067">ATP-binding</keyword>
<keyword id="KW-0963">Cytoplasm</keyword>
<keyword id="KW-0418">Kinase</keyword>
<keyword id="KW-0547">Nucleotide-binding</keyword>
<keyword id="KW-1185">Reference proteome</keyword>
<keyword id="KW-0808">Transferase</keyword>
<sequence>MAQGTLYIVSAPSGAGKSSLIQALLKTQPLYDTQVSVSHTTRQPRPGEVHGEHYFFVNHDEFKEMISRDAFLEHAEVFGNYYGTSREAIEQVLATGVDVFLDIDWQGAQQIRQKMPHARSIFILPPSKIELDRRLRGRGQDSEEVIAKRMAQAVAEMSHYAEYDYLIVNDDFDTALTDLKTIIRAERLRMSRQKQRHDALISKLLAD</sequence>
<feature type="chain" id="PRO_0000170535" description="Guanylate kinase">
    <location>
        <begin position="1"/>
        <end position="207"/>
    </location>
</feature>
<feature type="domain" description="Guanylate kinase-like">
    <location>
        <begin position="4"/>
        <end position="184"/>
    </location>
</feature>
<feature type="binding site" evidence="1">
    <location>
        <begin position="11"/>
        <end position="18"/>
    </location>
    <ligand>
        <name>ATP</name>
        <dbReference type="ChEBI" id="CHEBI:30616"/>
    </ligand>
</feature>
<name>KGUA_ECOL6</name>
<reference key="1">
    <citation type="journal article" date="2002" name="Proc. Natl. Acad. Sci. U.S.A.">
        <title>Extensive mosaic structure revealed by the complete genome sequence of uropathogenic Escherichia coli.</title>
        <authorList>
            <person name="Welch R.A."/>
            <person name="Burland V."/>
            <person name="Plunkett G. III"/>
            <person name="Redford P."/>
            <person name="Roesch P."/>
            <person name="Rasko D."/>
            <person name="Buckles E.L."/>
            <person name="Liou S.-R."/>
            <person name="Boutin A."/>
            <person name="Hackett J."/>
            <person name="Stroud D."/>
            <person name="Mayhew G.F."/>
            <person name="Rose D.J."/>
            <person name="Zhou S."/>
            <person name="Schwartz D.C."/>
            <person name="Perna N.T."/>
            <person name="Mobley H.L.T."/>
            <person name="Donnenberg M.S."/>
            <person name="Blattner F.R."/>
        </authorList>
    </citation>
    <scope>NUCLEOTIDE SEQUENCE [LARGE SCALE GENOMIC DNA]</scope>
    <source>
        <strain>CFT073 / ATCC 700928 / UPEC</strain>
    </source>
</reference>
<dbReference type="EC" id="2.7.4.8"/>
<dbReference type="EMBL" id="AE014075">
    <property type="protein sequence ID" value="AAN82909.1"/>
    <property type="status" value="ALT_INIT"/>
    <property type="molecule type" value="Genomic_DNA"/>
</dbReference>
<dbReference type="RefSeq" id="WP_001295237.1">
    <property type="nucleotide sequence ID" value="NZ_CP051263.1"/>
</dbReference>
<dbReference type="SMR" id="P60547"/>
<dbReference type="STRING" id="199310.c4473"/>
<dbReference type="GeneID" id="93778363"/>
<dbReference type="KEGG" id="ecc:c4473"/>
<dbReference type="eggNOG" id="COG0194">
    <property type="taxonomic scope" value="Bacteria"/>
</dbReference>
<dbReference type="HOGENOM" id="CLU_001715_1_2_6"/>
<dbReference type="Proteomes" id="UP000001410">
    <property type="component" value="Chromosome"/>
</dbReference>
<dbReference type="GO" id="GO:0005829">
    <property type="term" value="C:cytosol"/>
    <property type="evidence" value="ECO:0007669"/>
    <property type="project" value="TreeGrafter"/>
</dbReference>
<dbReference type="GO" id="GO:0005524">
    <property type="term" value="F:ATP binding"/>
    <property type="evidence" value="ECO:0007669"/>
    <property type="project" value="UniProtKB-UniRule"/>
</dbReference>
<dbReference type="GO" id="GO:0004385">
    <property type="term" value="F:guanylate kinase activity"/>
    <property type="evidence" value="ECO:0007669"/>
    <property type="project" value="UniProtKB-UniRule"/>
</dbReference>
<dbReference type="CDD" id="cd00071">
    <property type="entry name" value="GMPK"/>
    <property type="match status" value="1"/>
</dbReference>
<dbReference type="FunFam" id="3.40.50.300:FF:000084">
    <property type="entry name" value="Guanylate kinase"/>
    <property type="match status" value="1"/>
</dbReference>
<dbReference type="FunFam" id="3.30.63.10:FF:000002">
    <property type="entry name" value="Guanylate kinase 1"/>
    <property type="match status" value="1"/>
</dbReference>
<dbReference type="Gene3D" id="3.30.63.10">
    <property type="entry name" value="Guanylate Kinase phosphate binding domain"/>
    <property type="match status" value="1"/>
</dbReference>
<dbReference type="Gene3D" id="3.40.50.300">
    <property type="entry name" value="P-loop containing nucleotide triphosphate hydrolases"/>
    <property type="match status" value="1"/>
</dbReference>
<dbReference type="HAMAP" id="MF_00328">
    <property type="entry name" value="Guanylate_kinase"/>
    <property type="match status" value="1"/>
</dbReference>
<dbReference type="InterPro" id="IPR008145">
    <property type="entry name" value="GK/Ca_channel_bsu"/>
</dbReference>
<dbReference type="InterPro" id="IPR008144">
    <property type="entry name" value="Guanylate_kin-like_dom"/>
</dbReference>
<dbReference type="InterPro" id="IPR017665">
    <property type="entry name" value="Guanylate_kinase"/>
</dbReference>
<dbReference type="InterPro" id="IPR020590">
    <property type="entry name" value="Guanylate_kinase_CS"/>
</dbReference>
<dbReference type="InterPro" id="IPR027417">
    <property type="entry name" value="P-loop_NTPase"/>
</dbReference>
<dbReference type="NCBIfam" id="TIGR03263">
    <property type="entry name" value="guanyl_kin"/>
    <property type="match status" value="1"/>
</dbReference>
<dbReference type="PANTHER" id="PTHR23117:SF13">
    <property type="entry name" value="GUANYLATE KINASE"/>
    <property type="match status" value="1"/>
</dbReference>
<dbReference type="PANTHER" id="PTHR23117">
    <property type="entry name" value="GUANYLATE KINASE-RELATED"/>
    <property type="match status" value="1"/>
</dbReference>
<dbReference type="Pfam" id="PF00625">
    <property type="entry name" value="Guanylate_kin"/>
    <property type="match status" value="1"/>
</dbReference>
<dbReference type="SMART" id="SM00072">
    <property type="entry name" value="GuKc"/>
    <property type="match status" value="1"/>
</dbReference>
<dbReference type="SUPFAM" id="SSF52540">
    <property type="entry name" value="P-loop containing nucleoside triphosphate hydrolases"/>
    <property type="match status" value="1"/>
</dbReference>
<dbReference type="PROSITE" id="PS00856">
    <property type="entry name" value="GUANYLATE_KINASE_1"/>
    <property type="match status" value="1"/>
</dbReference>
<dbReference type="PROSITE" id="PS50052">
    <property type="entry name" value="GUANYLATE_KINASE_2"/>
    <property type="match status" value="1"/>
</dbReference>